<evidence type="ECO:0000255" key="1"/>
<evidence type="ECO:0000305" key="2"/>
<protein>
    <recommendedName>
        <fullName>Protein new-glue 4</fullName>
        <shortName>NG-4</shortName>
    </recommendedName>
</protein>
<organism>
    <name type="scientific">Drosophila melanogaster</name>
    <name type="common">Fruit fly</name>
    <dbReference type="NCBI Taxonomy" id="7227"/>
    <lineage>
        <taxon>Eukaryota</taxon>
        <taxon>Metazoa</taxon>
        <taxon>Ecdysozoa</taxon>
        <taxon>Arthropoda</taxon>
        <taxon>Hexapoda</taxon>
        <taxon>Insecta</taxon>
        <taxon>Pterygota</taxon>
        <taxon>Neoptera</taxon>
        <taxon>Endopterygota</taxon>
        <taxon>Diptera</taxon>
        <taxon>Brachycera</taxon>
        <taxon>Muscomorpha</taxon>
        <taxon>Ephydroidea</taxon>
        <taxon>Drosophilidae</taxon>
        <taxon>Drosophila</taxon>
        <taxon>Sophophora</taxon>
    </lineage>
</organism>
<sequence>MEWKLLLIVLPWLLVCKIFYKVEDFTEPDVAYQSIDYHPEDYIDSFTDFQKHDYFQY</sequence>
<gene>
    <name type="primary">ng4</name>
    <name type="ORF">CG10789</name>
</gene>
<comment type="subcellular location">
    <subcellularLocation>
        <location evidence="2">Secreted</location>
    </subcellularLocation>
</comment>
<feature type="signal peptide" evidence="1">
    <location>
        <begin position="1"/>
        <end position="16"/>
    </location>
</feature>
<feature type="chain" id="PRO_0000021813" description="Protein new-glue 4">
    <location>
        <begin position="17"/>
        <end position="57"/>
    </location>
</feature>
<name>NG4_DROME</name>
<accession>P40141</accession>
<accession>Q9W4T5</accession>
<keyword id="KW-1185">Reference proteome</keyword>
<keyword id="KW-0964">Secreted</keyword>
<keyword id="KW-0732">Signal</keyword>
<reference key="1">
    <citation type="journal article" date="1993" name="J. Mol. Biol.">
        <title>Dense cluster of genes is located at the ecdysone-regulated 3C puff of Drosophila melanogaster.</title>
        <authorList>
            <person name="Furia M."/>
            <person name="D'Avino P.P."/>
            <person name="Crispi S."/>
            <person name="Artiaco D."/>
            <person name="Polito L.C."/>
        </authorList>
    </citation>
    <scope>NUCLEOTIDE SEQUENCE [GENOMIC DNA]</scope>
    <source>
        <strain>Oregon-R</strain>
    </source>
</reference>
<reference key="2">
    <citation type="journal article" date="2000" name="Science">
        <title>The genome sequence of Drosophila melanogaster.</title>
        <authorList>
            <person name="Adams M.D."/>
            <person name="Celniker S.E."/>
            <person name="Holt R.A."/>
            <person name="Evans C.A."/>
            <person name="Gocayne J.D."/>
            <person name="Amanatides P.G."/>
            <person name="Scherer S.E."/>
            <person name="Li P.W."/>
            <person name="Hoskins R.A."/>
            <person name="Galle R.F."/>
            <person name="George R.A."/>
            <person name="Lewis S.E."/>
            <person name="Richards S."/>
            <person name="Ashburner M."/>
            <person name="Henderson S.N."/>
            <person name="Sutton G.G."/>
            <person name="Wortman J.R."/>
            <person name="Yandell M.D."/>
            <person name="Zhang Q."/>
            <person name="Chen L.X."/>
            <person name="Brandon R.C."/>
            <person name="Rogers Y.-H.C."/>
            <person name="Blazej R.G."/>
            <person name="Champe M."/>
            <person name="Pfeiffer B.D."/>
            <person name="Wan K.H."/>
            <person name="Doyle C."/>
            <person name="Baxter E.G."/>
            <person name="Helt G."/>
            <person name="Nelson C.R."/>
            <person name="Miklos G.L.G."/>
            <person name="Abril J.F."/>
            <person name="Agbayani A."/>
            <person name="An H.-J."/>
            <person name="Andrews-Pfannkoch C."/>
            <person name="Baldwin D."/>
            <person name="Ballew R.M."/>
            <person name="Basu A."/>
            <person name="Baxendale J."/>
            <person name="Bayraktaroglu L."/>
            <person name="Beasley E.M."/>
            <person name="Beeson K.Y."/>
            <person name="Benos P.V."/>
            <person name="Berman B.P."/>
            <person name="Bhandari D."/>
            <person name="Bolshakov S."/>
            <person name="Borkova D."/>
            <person name="Botchan M.R."/>
            <person name="Bouck J."/>
            <person name="Brokstein P."/>
            <person name="Brottier P."/>
            <person name="Burtis K.C."/>
            <person name="Busam D.A."/>
            <person name="Butler H."/>
            <person name="Cadieu E."/>
            <person name="Center A."/>
            <person name="Chandra I."/>
            <person name="Cherry J.M."/>
            <person name="Cawley S."/>
            <person name="Dahlke C."/>
            <person name="Davenport L.B."/>
            <person name="Davies P."/>
            <person name="de Pablos B."/>
            <person name="Delcher A."/>
            <person name="Deng Z."/>
            <person name="Mays A.D."/>
            <person name="Dew I."/>
            <person name="Dietz S.M."/>
            <person name="Dodson K."/>
            <person name="Doup L.E."/>
            <person name="Downes M."/>
            <person name="Dugan-Rocha S."/>
            <person name="Dunkov B.C."/>
            <person name="Dunn P."/>
            <person name="Durbin K.J."/>
            <person name="Evangelista C.C."/>
            <person name="Ferraz C."/>
            <person name="Ferriera S."/>
            <person name="Fleischmann W."/>
            <person name="Fosler C."/>
            <person name="Gabrielian A.E."/>
            <person name="Garg N.S."/>
            <person name="Gelbart W.M."/>
            <person name="Glasser K."/>
            <person name="Glodek A."/>
            <person name="Gong F."/>
            <person name="Gorrell J.H."/>
            <person name="Gu Z."/>
            <person name="Guan P."/>
            <person name="Harris M."/>
            <person name="Harris N.L."/>
            <person name="Harvey D.A."/>
            <person name="Heiman T.J."/>
            <person name="Hernandez J.R."/>
            <person name="Houck J."/>
            <person name="Hostin D."/>
            <person name="Houston K.A."/>
            <person name="Howland T.J."/>
            <person name="Wei M.-H."/>
            <person name="Ibegwam C."/>
            <person name="Jalali M."/>
            <person name="Kalush F."/>
            <person name="Karpen G.H."/>
            <person name="Ke Z."/>
            <person name="Kennison J.A."/>
            <person name="Ketchum K.A."/>
            <person name="Kimmel B.E."/>
            <person name="Kodira C.D."/>
            <person name="Kraft C.L."/>
            <person name="Kravitz S."/>
            <person name="Kulp D."/>
            <person name="Lai Z."/>
            <person name="Lasko P."/>
            <person name="Lei Y."/>
            <person name="Levitsky A.A."/>
            <person name="Li J.H."/>
            <person name="Li Z."/>
            <person name="Liang Y."/>
            <person name="Lin X."/>
            <person name="Liu X."/>
            <person name="Mattei B."/>
            <person name="McIntosh T.C."/>
            <person name="McLeod M.P."/>
            <person name="McPherson D."/>
            <person name="Merkulov G."/>
            <person name="Milshina N.V."/>
            <person name="Mobarry C."/>
            <person name="Morris J."/>
            <person name="Moshrefi A."/>
            <person name="Mount S.M."/>
            <person name="Moy M."/>
            <person name="Murphy B."/>
            <person name="Murphy L."/>
            <person name="Muzny D.M."/>
            <person name="Nelson D.L."/>
            <person name="Nelson D.R."/>
            <person name="Nelson K.A."/>
            <person name="Nixon K."/>
            <person name="Nusskern D.R."/>
            <person name="Pacleb J.M."/>
            <person name="Palazzolo M."/>
            <person name="Pittman G.S."/>
            <person name="Pan S."/>
            <person name="Pollard J."/>
            <person name="Puri V."/>
            <person name="Reese M.G."/>
            <person name="Reinert K."/>
            <person name="Remington K."/>
            <person name="Saunders R.D.C."/>
            <person name="Scheeler F."/>
            <person name="Shen H."/>
            <person name="Shue B.C."/>
            <person name="Siden-Kiamos I."/>
            <person name="Simpson M."/>
            <person name="Skupski M.P."/>
            <person name="Smith T.J."/>
            <person name="Spier E."/>
            <person name="Spradling A.C."/>
            <person name="Stapleton M."/>
            <person name="Strong R."/>
            <person name="Sun E."/>
            <person name="Svirskas R."/>
            <person name="Tector C."/>
            <person name="Turner R."/>
            <person name="Venter E."/>
            <person name="Wang A.H."/>
            <person name="Wang X."/>
            <person name="Wang Z.-Y."/>
            <person name="Wassarman D.A."/>
            <person name="Weinstock G.M."/>
            <person name="Weissenbach J."/>
            <person name="Williams S.M."/>
            <person name="Woodage T."/>
            <person name="Worley K.C."/>
            <person name="Wu D."/>
            <person name="Yang S."/>
            <person name="Yao Q.A."/>
            <person name="Ye J."/>
            <person name="Yeh R.-F."/>
            <person name="Zaveri J.S."/>
            <person name="Zhan M."/>
            <person name="Zhang G."/>
            <person name="Zhao Q."/>
            <person name="Zheng L."/>
            <person name="Zheng X.H."/>
            <person name="Zhong F.N."/>
            <person name="Zhong W."/>
            <person name="Zhou X."/>
            <person name="Zhu S.C."/>
            <person name="Zhu X."/>
            <person name="Smith H.O."/>
            <person name="Gibbs R.A."/>
            <person name="Myers E.W."/>
            <person name="Rubin G.M."/>
            <person name="Venter J.C."/>
        </authorList>
    </citation>
    <scope>NUCLEOTIDE SEQUENCE [LARGE SCALE GENOMIC DNA]</scope>
    <source>
        <strain>Berkeley</strain>
    </source>
</reference>
<reference key="3">
    <citation type="journal article" date="2002" name="Genome Biol.">
        <title>Annotation of the Drosophila melanogaster euchromatic genome: a systematic review.</title>
        <authorList>
            <person name="Misra S."/>
            <person name="Crosby M.A."/>
            <person name="Mungall C.J."/>
            <person name="Matthews B.B."/>
            <person name="Campbell K.S."/>
            <person name="Hradecky P."/>
            <person name="Huang Y."/>
            <person name="Kaminker J.S."/>
            <person name="Millburn G.H."/>
            <person name="Prochnik S.E."/>
            <person name="Smith C.D."/>
            <person name="Tupy J.L."/>
            <person name="Whitfield E.J."/>
            <person name="Bayraktaroglu L."/>
            <person name="Berman B.P."/>
            <person name="Bettencourt B.R."/>
            <person name="Celniker S.E."/>
            <person name="de Grey A.D.N.J."/>
            <person name="Drysdale R.A."/>
            <person name="Harris N.L."/>
            <person name="Richter J."/>
            <person name="Russo S."/>
            <person name="Schroeder A.J."/>
            <person name="Shu S.Q."/>
            <person name="Stapleton M."/>
            <person name="Yamada C."/>
            <person name="Ashburner M."/>
            <person name="Gelbart W.M."/>
            <person name="Rubin G.M."/>
            <person name="Lewis S.E."/>
        </authorList>
    </citation>
    <scope>GENOME REANNOTATION</scope>
    <source>
        <strain>Berkeley</strain>
    </source>
</reference>
<reference key="4">
    <citation type="journal article" date="2000" name="Science">
        <title>From sequence to chromosome: the tip of the X chromosome of D. melanogaster.</title>
        <authorList>
            <person name="Benos P.V."/>
            <person name="Gatt M.K."/>
            <person name="Ashburner M."/>
            <person name="Murphy L."/>
            <person name="Harris D."/>
            <person name="Barrell B.G."/>
            <person name="Ferraz C."/>
            <person name="Vidal S."/>
            <person name="Brun C."/>
            <person name="Demailles J."/>
            <person name="Cadieu E."/>
            <person name="Dreano S."/>
            <person name="Gloux S."/>
            <person name="Lelaure V."/>
            <person name="Mottier S."/>
            <person name="Galibert F."/>
            <person name="Borkova D."/>
            <person name="Minana B."/>
            <person name="Kafatos F.C."/>
            <person name="Louis C."/>
            <person name="Siden-Kiamos I."/>
            <person name="Bolshakov S."/>
            <person name="Papagiannakis G."/>
            <person name="Spanos L."/>
            <person name="Cox S."/>
            <person name="Madueno E."/>
            <person name="de Pablos B."/>
            <person name="Modolell J."/>
            <person name="Peter A."/>
            <person name="Schoettler P."/>
            <person name="Werner M."/>
            <person name="Mourkioti F."/>
            <person name="Beinert N."/>
            <person name="Dowe G."/>
            <person name="Schaefer U."/>
            <person name="Jaeckle H."/>
            <person name="Bucheton A."/>
            <person name="Callister D.M."/>
            <person name="Campbell L.A."/>
            <person name="Darlamitsou A."/>
            <person name="Henderson N.S."/>
            <person name="McMillan P.J."/>
            <person name="Salles C."/>
            <person name="Tait E.A."/>
            <person name="Valenti P."/>
            <person name="Saunders R.D.C."/>
            <person name="Glover D.M."/>
        </authorList>
    </citation>
    <scope>NUCLEOTIDE SEQUENCE [LARGE SCALE GENOMIC DNA]</scope>
    <source>
        <strain>Oregon-R</strain>
    </source>
</reference>
<proteinExistence type="inferred from homology"/>
<dbReference type="EMBL" id="X67501">
    <property type="protein sequence ID" value="CAA47835.1"/>
    <property type="molecule type" value="Genomic_DNA"/>
</dbReference>
<dbReference type="EMBL" id="AE014298">
    <property type="protein sequence ID" value="AAF45857.1"/>
    <property type="molecule type" value="Genomic_DNA"/>
</dbReference>
<dbReference type="EMBL" id="AL024484">
    <property type="protein sequence ID" value="CAA19672.1"/>
    <property type="molecule type" value="Genomic_DNA"/>
</dbReference>
<dbReference type="PIR" id="S33824">
    <property type="entry name" value="S33824"/>
</dbReference>
<dbReference type="RefSeq" id="NP_476944.1">
    <property type="nucleotide sequence ID" value="NM_057596.4"/>
</dbReference>
<dbReference type="BioGRID" id="57830">
    <property type="interactions" value="1"/>
</dbReference>
<dbReference type="DIP" id="DIP-18844N"/>
<dbReference type="STRING" id="7227.FBpp0070513"/>
<dbReference type="PaxDb" id="7227-FBpp0070513"/>
<dbReference type="DNASU" id="31301"/>
<dbReference type="EnsemblMetazoa" id="FBtr0070538">
    <property type="protein sequence ID" value="FBpp0070513"/>
    <property type="gene ID" value="FBgn0010296"/>
</dbReference>
<dbReference type="GeneID" id="31301"/>
<dbReference type="KEGG" id="dme:Dmel_CG10789"/>
<dbReference type="AGR" id="FB:FBgn0010296"/>
<dbReference type="CTD" id="31301"/>
<dbReference type="FlyBase" id="FBgn0010296">
    <property type="gene designation" value="ng4"/>
</dbReference>
<dbReference type="VEuPathDB" id="VectorBase:FBgn0010296"/>
<dbReference type="HOGENOM" id="CLU_2998581_0_0_1"/>
<dbReference type="InParanoid" id="P40141"/>
<dbReference type="OMA" id="ICKLFYR"/>
<dbReference type="OrthoDB" id="7839686at2759"/>
<dbReference type="PhylomeDB" id="P40141"/>
<dbReference type="BioGRID-ORCS" id="31301">
    <property type="hits" value="0 hits in 1 CRISPR screen"/>
</dbReference>
<dbReference type="GenomeRNAi" id="31301"/>
<dbReference type="PRO" id="PR:P40141"/>
<dbReference type="Proteomes" id="UP000000803">
    <property type="component" value="Chromosome X"/>
</dbReference>
<dbReference type="Bgee" id="FBgn0010296">
    <property type="expression patterns" value="Expressed in larva and 1 other cell type or tissue"/>
</dbReference>
<dbReference type="ExpressionAtlas" id="P40141">
    <property type="expression patterns" value="baseline and differential"/>
</dbReference>
<dbReference type="GO" id="GO:0005576">
    <property type="term" value="C:extracellular region"/>
    <property type="evidence" value="ECO:0007669"/>
    <property type="project" value="UniProtKB-SubCell"/>
</dbReference>